<keyword id="KW-0963">Cytoplasm</keyword>
<keyword id="KW-0413">Isomerase</keyword>
<keyword id="KW-0627">Porphyrin biosynthesis</keyword>
<keyword id="KW-0663">Pyridoxal phosphate</keyword>
<sequence length="427" mass="46175">MSFEKSIKAMEQAEKLMPGGVNSPVRAFKSVDTPAIFMDHGEGSKIYDIDGNEYIDYVLSWGPLILGHKNQQVISKLHEAVDKGTSFGASTLQENKLAELVIDRVPSIEKVRMVSSGTEATLDTLRLARGYTGRNKIIKFEGCYHGHSDSLLIKAGSGVATLGLPDSPGVPEGIAKNTITVPYNDLDSLKLAFEKYGDDIAGVIVEPVAGNMGVVPPVNGFLQGLRDITNEYGALLIFDEVMTGFRVGYNCAQGYFGVTPDLTCLGKVIGGGLPVGAFGGKKEIMDYIAPVGTIYQAGTLSGNPLAMTSGYETLSQLTPESYEYFNSLGDILEKGLKEVFAKHNVPITVNRAGSMIGYFLNEGPVTNFEEANKSDLKLFSNMYREMAKEGVFLPPSQFEGTFLSTAHTKDDIEKTIQAFDNALSRIV</sequence>
<name>GSA1_STAES</name>
<dbReference type="EC" id="5.4.3.8" evidence="1"/>
<dbReference type="EMBL" id="AE015929">
    <property type="protein sequence ID" value="AAO04941.1"/>
    <property type="molecule type" value="Genomic_DNA"/>
</dbReference>
<dbReference type="RefSeq" id="NP_764897.1">
    <property type="nucleotide sequence ID" value="NC_004461.1"/>
</dbReference>
<dbReference type="SMR" id="Q8CNZ1"/>
<dbReference type="KEGG" id="sep:SE_1342"/>
<dbReference type="PATRIC" id="fig|176280.10.peg.1311"/>
<dbReference type="eggNOG" id="COG0001">
    <property type="taxonomic scope" value="Bacteria"/>
</dbReference>
<dbReference type="HOGENOM" id="CLU_016922_1_5_9"/>
<dbReference type="OrthoDB" id="9807885at2"/>
<dbReference type="UniPathway" id="UPA00251">
    <property type="reaction ID" value="UER00317"/>
</dbReference>
<dbReference type="Proteomes" id="UP000001411">
    <property type="component" value="Chromosome"/>
</dbReference>
<dbReference type="GO" id="GO:0005737">
    <property type="term" value="C:cytoplasm"/>
    <property type="evidence" value="ECO:0007669"/>
    <property type="project" value="UniProtKB-SubCell"/>
</dbReference>
<dbReference type="GO" id="GO:0042286">
    <property type="term" value="F:glutamate-1-semialdehyde 2,1-aminomutase activity"/>
    <property type="evidence" value="ECO:0007669"/>
    <property type="project" value="UniProtKB-UniRule"/>
</dbReference>
<dbReference type="GO" id="GO:0030170">
    <property type="term" value="F:pyridoxal phosphate binding"/>
    <property type="evidence" value="ECO:0007669"/>
    <property type="project" value="InterPro"/>
</dbReference>
<dbReference type="GO" id="GO:0008483">
    <property type="term" value="F:transaminase activity"/>
    <property type="evidence" value="ECO:0007669"/>
    <property type="project" value="InterPro"/>
</dbReference>
<dbReference type="GO" id="GO:0006782">
    <property type="term" value="P:protoporphyrinogen IX biosynthetic process"/>
    <property type="evidence" value="ECO:0007669"/>
    <property type="project" value="UniProtKB-UniRule"/>
</dbReference>
<dbReference type="CDD" id="cd00610">
    <property type="entry name" value="OAT_like"/>
    <property type="match status" value="1"/>
</dbReference>
<dbReference type="FunFam" id="3.40.640.10:FF:000021">
    <property type="entry name" value="Glutamate-1-semialdehyde 2,1-aminomutase"/>
    <property type="match status" value="1"/>
</dbReference>
<dbReference type="Gene3D" id="3.90.1150.10">
    <property type="entry name" value="Aspartate Aminotransferase, domain 1"/>
    <property type="match status" value="1"/>
</dbReference>
<dbReference type="Gene3D" id="3.40.640.10">
    <property type="entry name" value="Type I PLP-dependent aspartate aminotransferase-like (Major domain)"/>
    <property type="match status" value="1"/>
</dbReference>
<dbReference type="HAMAP" id="MF_00375">
    <property type="entry name" value="HemL_aminotrans_3"/>
    <property type="match status" value="1"/>
</dbReference>
<dbReference type="InterPro" id="IPR004639">
    <property type="entry name" value="4pyrrol_synth_GluAld_NH2Trfase"/>
</dbReference>
<dbReference type="InterPro" id="IPR005814">
    <property type="entry name" value="Aminotrans_3"/>
</dbReference>
<dbReference type="InterPro" id="IPR049704">
    <property type="entry name" value="Aminotrans_3_PPA_site"/>
</dbReference>
<dbReference type="InterPro" id="IPR015424">
    <property type="entry name" value="PyrdxlP-dep_Trfase"/>
</dbReference>
<dbReference type="InterPro" id="IPR015421">
    <property type="entry name" value="PyrdxlP-dep_Trfase_major"/>
</dbReference>
<dbReference type="InterPro" id="IPR015422">
    <property type="entry name" value="PyrdxlP-dep_Trfase_small"/>
</dbReference>
<dbReference type="NCBIfam" id="TIGR00713">
    <property type="entry name" value="hemL"/>
    <property type="match status" value="1"/>
</dbReference>
<dbReference type="NCBIfam" id="NF000818">
    <property type="entry name" value="PRK00062.1"/>
    <property type="match status" value="1"/>
</dbReference>
<dbReference type="PANTHER" id="PTHR43713">
    <property type="entry name" value="GLUTAMATE-1-SEMIALDEHYDE 2,1-AMINOMUTASE"/>
    <property type="match status" value="1"/>
</dbReference>
<dbReference type="PANTHER" id="PTHR43713:SF3">
    <property type="entry name" value="GLUTAMATE-1-SEMIALDEHYDE 2,1-AMINOMUTASE 1, CHLOROPLASTIC-RELATED"/>
    <property type="match status" value="1"/>
</dbReference>
<dbReference type="Pfam" id="PF00202">
    <property type="entry name" value="Aminotran_3"/>
    <property type="match status" value="1"/>
</dbReference>
<dbReference type="SUPFAM" id="SSF53383">
    <property type="entry name" value="PLP-dependent transferases"/>
    <property type="match status" value="1"/>
</dbReference>
<dbReference type="PROSITE" id="PS00600">
    <property type="entry name" value="AA_TRANSFER_CLASS_3"/>
    <property type="match status" value="1"/>
</dbReference>
<organism>
    <name type="scientific">Staphylococcus epidermidis (strain ATCC 12228 / FDA PCI 1200)</name>
    <dbReference type="NCBI Taxonomy" id="176280"/>
    <lineage>
        <taxon>Bacteria</taxon>
        <taxon>Bacillati</taxon>
        <taxon>Bacillota</taxon>
        <taxon>Bacilli</taxon>
        <taxon>Bacillales</taxon>
        <taxon>Staphylococcaceae</taxon>
        <taxon>Staphylococcus</taxon>
    </lineage>
</organism>
<gene>
    <name evidence="1" type="primary">hemL1</name>
    <name type="ordered locus">SE_1342</name>
</gene>
<comment type="catalytic activity">
    <reaction evidence="1">
        <text>(S)-4-amino-5-oxopentanoate = 5-aminolevulinate</text>
        <dbReference type="Rhea" id="RHEA:14265"/>
        <dbReference type="ChEBI" id="CHEBI:57501"/>
        <dbReference type="ChEBI" id="CHEBI:356416"/>
        <dbReference type="EC" id="5.4.3.8"/>
    </reaction>
</comment>
<comment type="cofactor">
    <cofactor evidence="1">
        <name>pyridoxal 5'-phosphate</name>
        <dbReference type="ChEBI" id="CHEBI:597326"/>
    </cofactor>
</comment>
<comment type="pathway">
    <text evidence="1">Porphyrin-containing compound metabolism; protoporphyrin-IX biosynthesis; 5-aminolevulinate from L-glutamyl-tRNA(Glu): step 2/2.</text>
</comment>
<comment type="subunit">
    <text evidence="1">Homodimer.</text>
</comment>
<comment type="subcellular location">
    <subcellularLocation>
        <location evidence="1">Cytoplasm</location>
    </subcellularLocation>
</comment>
<comment type="similarity">
    <text evidence="1">Belongs to the class-III pyridoxal-phosphate-dependent aminotransferase family. HemL subfamily.</text>
</comment>
<proteinExistence type="inferred from homology"/>
<feature type="chain" id="PRO_0000120454" description="Glutamate-1-semialdehyde 2,1-aminomutase 1">
    <location>
        <begin position="1"/>
        <end position="427"/>
    </location>
</feature>
<feature type="modified residue" description="N6-(pyridoxal phosphate)lysine" evidence="1">
    <location>
        <position position="267"/>
    </location>
</feature>
<evidence type="ECO:0000255" key="1">
    <source>
        <dbReference type="HAMAP-Rule" id="MF_00375"/>
    </source>
</evidence>
<protein>
    <recommendedName>
        <fullName evidence="1">Glutamate-1-semialdehyde 2,1-aminomutase 1</fullName>
        <shortName evidence="1">GSA 1</shortName>
        <ecNumber evidence="1">5.4.3.8</ecNumber>
    </recommendedName>
    <alternativeName>
        <fullName evidence="1">Glutamate-1-semialdehyde aminotransferase 1</fullName>
        <shortName evidence="1">GSA-AT 1</shortName>
    </alternativeName>
</protein>
<reference key="1">
    <citation type="journal article" date="2003" name="Mol. Microbiol.">
        <title>Genome-based analysis of virulence genes in a non-biofilm-forming Staphylococcus epidermidis strain (ATCC 12228).</title>
        <authorList>
            <person name="Zhang Y.-Q."/>
            <person name="Ren S.-X."/>
            <person name="Li H.-L."/>
            <person name="Wang Y.-X."/>
            <person name="Fu G."/>
            <person name="Yang J."/>
            <person name="Qin Z.-Q."/>
            <person name="Miao Y.-G."/>
            <person name="Wang W.-Y."/>
            <person name="Chen R.-S."/>
            <person name="Shen Y."/>
            <person name="Chen Z."/>
            <person name="Yuan Z.-H."/>
            <person name="Zhao G.-P."/>
            <person name="Qu D."/>
            <person name="Danchin A."/>
            <person name="Wen Y.-M."/>
        </authorList>
    </citation>
    <scope>NUCLEOTIDE SEQUENCE [LARGE SCALE GENOMIC DNA]</scope>
    <source>
        <strain>ATCC 12228 / FDA PCI 1200</strain>
    </source>
</reference>
<accession>Q8CNZ1</accession>